<organism>
    <name type="scientific">Staphylococcus aureus (strain MSSA476)</name>
    <dbReference type="NCBI Taxonomy" id="282459"/>
    <lineage>
        <taxon>Bacteria</taxon>
        <taxon>Bacillati</taxon>
        <taxon>Bacillota</taxon>
        <taxon>Bacilli</taxon>
        <taxon>Bacillales</taxon>
        <taxon>Staphylococcaceae</taxon>
        <taxon>Staphylococcus</taxon>
    </lineage>
</organism>
<protein>
    <recommendedName>
        <fullName>Extracellular matrix protein-binding protein emp</fullName>
    </recommendedName>
</protein>
<sequence>MKKKLLVLTMSTLFATQIMNSNHAKASVTESVDKKFVVPESGINKIIPTYNEFKKAPKVNVGNLADNKNFVASEDKLNKIVDSSAASKIVDKNFAVPESKLGNIVPEYKEINNRVNVATNNPASQQVDKHFVAKGPEVNRFITQNKVNHHFITTQTHYKKVITSYKSTHVHKHVNHAKDSINKHFIVKPSESPRYTHPSQSLIIKHHFAVPGYHAHKFVTPGHASIKINHFCVVPQINSFKVIPPYGHNSHRMHVPSFQNNTTATHQNAKVNKAYDYKYFYSYKVVKGVKKYFSFSQSNGYKIGKPSLNIKNVNYQYAVPSYSPTHYVPEFKGSLPAPRV</sequence>
<gene>
    <name type="primary">emp</name>
    <name type="ordered locus">SAS0754</name>
</gene>
<keyword id="KW-0732">Signal</keyword>
<accession>Q6GB43</accession>
<proteinExistence type="inferred from homology"/>
<dbReference type="EMBL" id="BX571857">
    <property type="protein sequence ID" value="CAG42528.1"/>
    <property type="molecule type" value="Genomic_DNA"/>
</dbReference>
<dbReference type="RefSeq" id="WP_000728062.1">
    <property type="nucleotide sequence ID" value="NC_002953.3"/>
</dbReference>
<dbReference type="KEGG" id="sas:SAS0754"/>
<dbReference type="HOGENOM" id="CLU_078520_0_0_9"/>
<dbReference type="GO" id="GO:0009986">
    <property type="term" value="C:cell surface"/>
    <property type="evidence" value="ECO:0007669"/>
    <property type="project" value="UniProtKB-SubCell"/>
</dbReference>
<feature type="signal peptide" evidence="1">
    <location>
        <begin position="1"/>
        <end position="26"/>
    </location>
</feature>
<feature type="chain" id="PRO_0000271539" description="Extracellular matrix protein-binding protein emp">
    <location>
        <begin position="27"/>
        <end position="340"/>
    </location>
</feature>
<name>EMP_STAAS</name>
<comment type="function">
    <text evidence="1">Adhesin that binds to the host cell extracellular matrix proteins fibronectin, fibrinogen, collagen, and vitronectin.</text>
</comment>
<comment type="subcellular location">
    <subcellularLocation>
        <location evidence="1">Cell surface</location>
    </subcellularLocation>
</comment>
<evidence type="ECO:0000250" key="1"/>
<reference key="1">
    <citation type="journal article" date="2004" name="Proc. Natl. Acad. Sci. U.S.A.">
        <title>Complete genomes of two clinical Staphylococcus aureus strains: evidence for the rapid evolution of virulence and drug resistance.</title>
        <authorList>
            <person name="Holden M.T.G."/>
            <person name="Feil E.J."/>
            <person name="Lindsay J.A."/>
            <person name="Peacock S.J."/>
            <person name="Day N.P.J."/>
            <person name="Enright M.C."/>
            <person name="Foster T.J."/>
            <person name="Moore C.E."/>
            <person name="Hurst L."/>
            <person name="Atkin R."/>
            <person name="Barron A."/>
            <person name="Bason N."/>
            <person name="Bentley S.D."/>
            <person name="Chillingworth C."/>
            <person name="Chillingworth T."/>
            <person name="Churcher C."/>
            <person name="Clark L."/>
            <person name="Corton C."/>
            <person name="Cronin A."/>
            <person name="Doggett J."/>
            <person name="Dowd L."/>
            <person name="Feltwell T."/>
            <person name="Hance Z."/>
            <person name="Harris B."/>
            <person name="Hauser H."/>
            <person name="Holroyd S."/>
            <person name="Jagels K."/>
            <person name="James K.D."/>
            <person name="Lennard N."/>
            <person name="Line A."/>
            <person name="Mayes R."/>
            <person name="Moule S."/>
            <person name="Mungall K."/>
            <person name="Ormond D."/>
            <person name="Quail M.A."/>
            <person name="Rabbinowitsch E."/>
            <person name="Rutherford K.M."/>
            <person name="Sanders M."/>
            <person name="Sharp S."/>
            <person name="Simmonds M."/>
            <person name="Stevens K."/>
            <person name="Whitehead S."/>
            <person name="Barrell B.G."/>
            <person name="Spratt B.G."/>
            <person name="Parkhill J."/>
        </authorList>
    </citation>
    <scope>NUCLEOTIDE SEQUENCE [LARGE SCALE GENOMIC DNA]</scope>
    <source>
        <strain>MSSA476</strain>
    </source>
</reference>